<protein>
    <recommendedName>
        <fullName evidence="3">Proton-translocating ferredoxin:NAD(+) oxidoreductase complex subunit A</fullName>
        <ecNumber evidence="1 2">7.1.1.-</ecNumber>
    </recommendedName>
    <alternativeName>
        <fullName evidence="1 3">Rnf electron transport complex subunit A</fullName>
    </alternativeName>
</protein>
<organism>
    <name type="scientific">Clostridium ljungdahlii (strain ATCC 55383 / DSM 13528 / PETC)</name>
    <dbReference type="NCBI Taxonomy" id="748727"/>
    <lineage>
        <taxon>Bacteria</taxon>
        <taxon>Bacillati</taxon>
        <taxon>Bacillota</taxon>
        <taxon>Clostridia</taxon>
        <taxon>Eubacteriales</taxon>
        <taxon>Clostridiaceae</taxon>
        <taxon>Clostridium</taxon>
    </lineage>
</organism>
<comment type="function">
    <text evidence="2">Part of a membrane-bound complex that couples electron transfer with translocation of ions across the membrane. Couples electron transfer from reduced ferredoxin to NAD(+) with translocation of H(+) out of the cell. Essential for energy conservation during autotrophic growth. Contributes to ATP synthesis during heterotrophic growth.</text>
</comment>
<comment type="subunit">
    <text evidence="1">The complex is composed of six subunits: RnfA, RnfB, RnfC, RnfD, RnfE and RnfG.</text>
</comment>
<comment type="subcellular location">
    <subcellularLocation>
        <location evidence="1">Cell membrane</location>
        <topology evidence="1">Multi-pass membrane protein</topology>
    </subcellularLocation>
</comment>
<comment type="similarity">
    <text evidence="1">Belongs to the NqrDE/RnfAE family.</text>
</comment>
<reference key="1">
    <citation type="journal article" date="2010" name="Proc. Natl. Acad. Sci. U.S.A.">
        <title>Clostridium ljungdahlii represents a microbial production platform based on syngas.</title>
        <authorList>
            <person name="Kopke M."/>
            <person name="Held C."/>
            <person name="Hujer S."/>
            <person name="Liesegang H."/>
            <person name="Wiezer A."/>
            <person name="Wollherr A."/>
            <person name="Ehrenreich A."/>
            <person name="Liebl W."/>
            <person name="Gottschalk G."/>
            <person name="Durre P."/>
        </authorList>
    </citation>
    <scope>NUCLEOTIDE SEQUENCE [LARGE SCALE GENOMIC DNA]</scope>
    <source>
        <strain>ATCC 55383 / DSM 13528 / PETC</strain>
    </source>
</reference>
<reference key="2">
    <citation type="journal article" date="2012" name="MBio">
        <title>The Rnf complex of Clostridium ljungdahlii is a proton-translocating ferredoxin:NAD+ oxidoreductase essential for autotrophic growth.</title>
        <authorList>
            <person name="Tremblay P.L."/>
            <person name="Zhang T."/>
            <person name="Dar S.A."/>
            <person name="Leang C."/>
            <person name="Lovley D.R."/>
        </authorList>
    </citation>
    <scope>FUNCTION</scope>
    <source>
        <strain>ATCC 55383 / DSM 13528 / PETC</strain>
    </source>
</reference>
<accession>D8GR70</accession>
<sequence>MASYLTLFISAVVVNNYVLTRFLGLCIFFGVSKNLNASVGMGMAVTSVITMSSILAWVVYHFVLIPFNLTFLKTVVFVLLIASFVQLLETIIKKQAPALYNMWGIYLLLIATNCIVLAVPILNADSNFNFLQSVVNAIGSGLGFAMAIILMASLREKLRLADVPKPLEGLGVAFILAGMLALAFLGFSGMISI</sequence>
<gene>
    <name evidence="1 4" type="primary">rnfA</name>
    <name evidence="4" type="ordered locus">CLJU_c11400</name>
</gene>
<proteinExistence type="inferred from homology"/>
<evidence type="ECO:0000255" key="1">
    <source>
        <dbReference type="HAMAP-Rule" id="MF_00459"/>
    </source>
</evidence>
<evidence type="ECO:0000269" key="2">
    <source>
    </source>
</evidence>
<evidence type="ECO:0000305" key="3"/>
<evidence type="ECO:0000312" key="4">
    <source>
        <dbReference type="EMBL" id="ADK14208.1"/>
    </source>
</evidence>
<dbReference type="EC" id="7.1.1.-" evidence="1 2"/>
<dbReference type="EMBL" id="CP001666">
    <property type="protein sequence ID" value="ADK14208.1"/>
    <property type="molecule type" value="Genomic_DNA"/>
</dbReference>
<dbReference type="RefSeq" id="WP_013237805.1">
    <property type="nucleotide sequence ID" value="NZ_LITS01000015.1"/>
</dbReference>
<dbReference type="SMR" id="D8GR70"/>
<dbReference type="STRING" id="748727.CLJU_c11400"/>
<dbReference type="KEGG" id="clj:CLJU_c11400"/>
<dbReference type="PATRIC" id="fig|748727.19.peg.4232"/>
<dbReference type="eggNOG" id="COG4657">
    <property type="taxonomic scope" value="Bacteria"/>
</dbReference>
<dbReference type="HOGENOM" id="CLU_095255_1_0_9"/>
<dbReference type="OrthoDB" id="9803631at2"/>
<dbReference type="BRENDA" id="1.18.1.3">
    <property type="organism ID" value="12866"/>
</dbReference>
<dbReference type="BRENDA" id="7.1.1.11">
    <property type="organism ID" value="12866"/>
</dbReference>
<dbReference type="Proteomes" id="UP000001656">
    <property type="component" value="Chromosome"/>
</dbReference>
<dbReference type="GO" id="GO:0005886">
    <property type="term" value="C:plasma membrane"/>
    <property type="evidence" value="ECO:0007669"/>
    <property type="project" value="UniProtKB-SubCell"/>
</dbReference>
<dbReference type="GO" id="GO:0022900">
    <property type="term" value="P:electron transport chain"/>
    <property type="evidence" value="ECO:0007669"/>
    <property type="project" value="UniProtKB-UniRule"/>
</dbReference>
<dbReference type="HAMAP" id="MF_00459">
    <property type="entry name" value="RsxA_RnfA"/>
    <property type="match status" value="1"/>
</dbReference>
<dbReference type="InterPro" id="IPR011293">
    <property type="entry name" value="Ion_transpt_RnfA/RsxA"/>
</dbReference>
<dbReference type="InterPro" id="IPR003667">
    <property type="entry name" value="NqrDE/RnfAE"/>
</dbReference>
<dbReference type="InterPro" id="IPR050133">
    <property type="entry name" value="NqrDE/RnfAE_oxidrdctase"/>
</dbReference>
<dbReference type="NCBIfam" id="TIGR01943">
    <property type="entry name" value="rnfA"/>
    <property type="match status" value="1"/>
</dbReference>
<dbReference type="PANTHER" id="PTHR30335">
    <property type="entry name" value="INTEGRAL MEMBRANE PROTEIN OF SOXR-REDUCING COMPLEX"/>
    <property type="match status" value="1"/>
</dbReference>
<dbReference type="PANTHER" id="PTHR30335:SF0">
    <property type="entry name" value="ION-TRANSLOCATING OXIDOREDUCTASE COMPLEX SUBUNIT A"/>
    <property type="match status" value="1"/>
</dbReference>
<dbReference type="Pfam" id="PF02508">
    <property type="entry name" value="Rnf-Nqr"/>
    <property type="match status" value="1"/>
</dbReference>
<dbReference type="PIRSF" id="PIRSF006102">
    <property type="entry name" value="NQR_DE"/>
    <property type="match status" value="1"/>
</dbReference>
<name>RNFA_CLOLD</name>
<keyword id="KW-1003">Cell membrane</keyword>
<keyword id="KW-0249">Electron transport</keyword>
<keyword id="KW-0472">Membrane</keyword>
<keyword id="KW-0520">NAD</keyword>
<keyword id="KW-1278">Translocase</keyword>
<keyword id="KW-0812">Transmembrane</keyword>
<keyword id="KW-1133">Transmembrane helix</keyword>
<keyword id="KW-0813">Transport</keyword>
<feature type="chain" id="PRO_0000443483" description="Proton-translocating ferredoxin:NAD(+) oxidoreductase complex subunit A">
    <location>
        <begin position="1"/>
        <end position="193"/>
    </location>
</feature>
<feature type="transmembrane region" description="Helical" evidence="1">
    <location>
        <begin position="11"/>
        <end position="31"/>
    </location>
</feature>
<feature type="transmembrane region" description="Helical" evidence="1">
    <location>
        <begin position="39"/>
        <end position="59"/>
    </location>
</feature>
<feature type="transmembrane region" description="Helical" evidence="1">
    <location>
        <begin position="62"/>
        <end position="82"/>
    </location>
</feature>
<feature type="transmembrane region" description="Helical" evidence="1">
    <location>
        <begin position="102"/>
        <end position="122"/>
    </location>
</feature>
<feature type="transmembrane region" description="Helical" evidence="1">
    <location>
        <begin position="134"/>
        <end position="154"/>
    </location>
</feature>
<feature type="transmembrane region" description="Helical" evidence="1">
    <location>
        <begin position="171"/>
        <end position="191"/>
    </location>
</feature>